<organism>
    <name type="scientific">Xanthomonas oryzae pv. oryzae (strain KACC10331 / KXO85)</name>
    <dbReference type="NCBI Taxonomy" id="291331"/>
    <lineage>
        <taxon>Bacteria</taxon>
        <taxon>Pseudomonadati</taxon>
        <taxon>Pseudomonadota</taxon>
        <taxon>Gammaproteobacteria</taxon>
        <taxon>Lysobacterales</taxon>
        <taxon>Lysobacteraceae</taxon>
        <taxon>Xanthomonas</taxon>
    </lineage>
</organism>
<dbReference type="EC" id="3.4.13.9" evidence="1"/>
<dbReference type="EMBL" id="AE013598">
    <property type="protein sequence ID" value="AAW74391.1"/>
    <property type="status" value="ALT_INIT"/>
    <property type="molecule type" value="Genomic_DNA"/>
</dbReference>
<dbReference type="SMR" id="Q5H3T0"/>
<dbReference type="STRING" id="291331.XOO1137"/>
<dbReference type="MEROPS" id="M24.003"/>
<dbReference type="KEGG" id="xoo:XOO1137"/>
<dbReference type="PATRIC" id="fig|291331.8.peg.1265"/>
<dbReference type="HOGENOM" id="CLU_050675_0_0_6"/>
<dbReference type="Proteomes" id="UP000006735">
    <property type="component" value="Chromosome"/>
</dbReference>
<dbReference type="GO" id="GO:0005829">
    <property type="term" value="C:cytosol"/>
    <property type="evidence" value="ECO:0007669"/>
    <property type="project" value="TreeGrafter"/>
</dbReference>
<dbReference type="GO" id="GO:0004177">
    <property type="term" value="F:aminopeptidase activity"/>
    <property type="evidence" value="ECO:0007669"/>
    <property type="project" value="TreeGrafter"/>
</dbReference>
<dbReference type="GO" id="GO:0046872">
    <property type="term" value="F:metal ion binding"/>
    <property type="evidence" value="ECO:0007669"/>
    <property type="project" value="UniProtKB-KW"/>
</dbReference>
<dbReference type="GO" id="GO:0008235">
    <property type="term" value="F:metalloexopeptidase activity"/>
    <property type="evidence" value="ECO:0007669"/>
    <property type="project" value="UniProtKB-UniRule"/>
</dbReference>
<dbReference type="GO" id="GO:0016795">
    <property type="term" value="F:phosphoric triester hydrolase activity"/>
    <property type="evidence" value="ECO:0007669"/>
    <property type="project" value="InterPro"/>
</dbReference>
<dbReference type="GO" id="GO:0102009">
    <property type="term" value="F:proline dipeptidase activity"/>
    <property type="evidence" value="ECO:0007669"/>
    <property type="project" value="UniProtKB-EC"/>
</dbReference>
<dbReference type="GO" id="GO:0006508">
    <property type="term" value="P:proteolysis"/>
    <property type="evidence" value="ECO:0007669"/>
    <property type="project" value="UniProtKB-KW"/>
</dbReference>
<dbReference type="CDD" id="cd01087">
    <property type="entry name" value="Prolidase"/>
    <property type="match status" value="1"/>
</dbReference>
<dbReference type="Gene3D" id="3.90.230.10">
    <property type="entry name" value="Creatinase/methionine aminopeptidase superfamily"/>
    <property type="match status" value="1"/>
</dbReference>
<dbReference type="Gene3D" id="3.40.350.10">
    <property type="entry name" value="Creatinase/prolidase N-terminal domain"/>
    <property type="match status" value="1"/>
</dbReference>
<dbReference type="HAMAP" id="MF_01279">
    <property type="entry name" value="X_Pro_dipeptid"/>
    <property type="match status" value="1"/>
</dbReference>
<dbReference type="InterPro" id="IPR029149">
    <property type="entry name" value="Creatin/AminoP/Spt16_N"/>
</dbReference>
<dbReference type="InterPro" id="IPR036005">
    <property type="entry name" value="Creatinase/aminopeptidase-like"/>
</dbReference>
<dbReference type="InterPro" id="IPR048819">
    <property type="entry name" value="PepQ_N"/>
</dbReference>
<dbReference type="InterPro" id="IPR000994">
    <property type="entry name" value="Pept_M24"/>
</dbReference>
<dbReference type="InterPro" id="IPR001131">
    <property type="entry name" value="Peptidase_M24B_aminopep-P_CS"/>
</dbReference>
<dbReference type="InterPro" id="IPR052433">
    <property type="entry name" value="X-Pro_dipept-like"/>
</dbReference>
<dbReference type="InterPro" id="IPR022846">
    <property type="entry name" value="X_Pro_dipept"/>
</dbReference>
<dbReference type="NCBIfam" id="NF010133">
    <property type="entry name" value="PRK13607.1"/>
    <property type="match status" value="1"/>
</dbReference>
<dbReference type="PANTHER" id="PTHR43226">
    <property type="entry name" value="XAA-PRO AMINOPEPTIDASE 3"/>
    <property type="match status" value="1"/>
</dbReference>
<dbReference type="PANTHER" id="PTHR43226:SF8">
    <property type="entry name" value="XAA-PRO DIPEPTIDASE"/>
    <property type="match status" value="1"/>
</dbReference>
<dbReference type="Pfam" id="PF21216">
    <property type="entry name" value="PepQ_N"/>
    <property type="match status" value="1"/>
</dbReference>
<dbReference type="Pfam" id="PF00557">
    <property type="entry name" value="Peptidase_M24"/>
    <property type="match status" value="1"/>
</dbReference>
<dbReference type="SUPFAM" id="SSF55920">
    <property type="entry name" value="Creatinase/aminopeptidase"/>
    <property type="match status" value="1"/>
</dbReference>
<dbReference type="PROSITE" id="PS00491">
    <property type="entry name" value="PROLINE_PEPTIDASE"/>
    <property type="match status" value="1"/>
</dbReference>
<name>PEPQ_XANOR</name>
<comment type="function">
    <text evidence="1">Splits dipeptides with a prolyl residue in the C-terminal position.</text>
</comment>
<comment type="catalytic activity">
    <reaction evidence="1">
        <text>Xaa-L-Pro dipeptide + H2O = an L-alpha-amino acid + L-proline</text>
        <dbReference type="Rhea" id="RHEA:76407"/>
        <dbReference type="ChEBI" id="CHEBI:15377"/>
        <dbReference type="ChEBI" id="CHEBI:59869"/>
        <dbReference type="ChEBI" id="CHEBI:60039"/>
        <dbReference type="ChEBI" id="CHEBI:195196"/>
        <dbReference type="EC" id="3.4.13.9"/>
    </reaction>
</comment>
<comment type="cofactor">
    <cofactor evidence="1">
        <name>Mn(2+)</name>
        <dbReference type="ChEBI" id="CHEBI:29035"/>
    </cofactor>
    <text evidence="1">Binds 2 manganese ions per subunit.</text>
</comment>
<comment type="similarity">
    <text evidence="1">Belongs to the peptidase M24B family. Bacterial-type prolidase subfamily.</text>
</comment>
<comment type="sequence caution" evidence="2">
    <conflict type="erroneous initiation">
        <sequence resource="EMBL-CDS" id="AAW74391"/>
    </conflict>
</comment>
<protein>
    <recommendedName>
        <fullName evidence="1">Xaa-Pro dipeptidase</fullName>
        <shortName evidence="1">X-Pro dipeptidase</shortName>
        <ecNumber evidence="1">3.4.13.9</ecNumber>
    </recommendedName>
    <alternativeName>
        <fullName evidence="1">Imidodipeptidase</fullName>
    </alternativeName>
    <alternativeName>
        <fullName evidence="1">Proline dipeptidase</fullName>
        <shortName evidence="1">Prolidase</shortName>
    </alternativeName>
</protein>
<accession>Q5H3T0</accession>
<proteinExistence type="inferred from homology"/>
<gene>
    <name evidence="1" type="primary">pepQ</name>
    <name type="ordered locus">XOO1137</name>
</gene>
<evidence type="ECO:0000255" key="1">
    <source>
        <dbReference type="HAMAP-Rule" id="MF_01279"/>
    </source>
</evidence>
<evidence type="ECO:0000305" key="2"/>
<sequence>MTQPSLNSLYSDHLRTLTARADEALQRGGFAHLVVPSGNTHYQLFDDRDYPYAVNPQFKAWLPLTRVPHSWLVYTPGKRPIVIFYQPFDYWHVVPDAPSGWWVEHCDIHIIRRPDEALALLPKQAERCAILGEAQSTLGAYVPNNPQPVLDYLEYQRAFKTAYELALLRIAQQLAVRGHRAAEAAFRAGQSEFGIHMAYCAAVGQDANELPYGNIIALNEHGAVLHYTELGQQPPQPLRSFLIDAGASAYGYASDITRTYAADPGSDFQALINAVDAAQLRMGQNVRAGVDYKQLHIDAHLALMGILKEFGVLTVSPEAALATGISAAFFPHGLGHLIGLQVHDVAGFAASDRGGRIQRPEGHPYLRLTRVLEPGMVVTIEPGVYFIDMLLDEVKKNGHAASVNWQRVEAFKPYGGIRIEDEVVCTDGNAENLTRPVFAAA</sequence>
<feature type="chain" id="PRO_0000303876" description="Xaa-Pro dipeptidase">
    <location>
        <begin position="1"/>
        <end position="441"/>
    </location>
</feature>
<feature type="binding site" evidence="1">
    <location>
        <position position="244"/>
    </location>
    <ligand>
        <name>Mn(2+)</name>
        <dbReference type="ChEBI" id="CHEBI:29035"/>
        <label>2</label>
    </ligand>
</feature>
<feature type="binding site" evidence="1">
    <location>
        <position position="255"/>
    </location>
    <ligand>
        <name>Mn(2+)</name>
        <dbReference type="ChEBI" id="CHEBI:29035"/>
        <label>1</label>
    </ligand>
</feature>
<feature type="binding site" evidence="1">
    <location>
        <position position="255"/>
    </location>
    <ligand>
        <name>Mn(2+)</name>
        <dbReference type="ChEBI" id="CHEBI:29035"/>
        <label>2</label>
    </ligand>
</feature>
<feature type="binding site" evidence="1">
    <location>
        <position position="336"/>
    </location>
    <ligand>
        <name>Mn(2+)</name>
        <dbReference type="ChEBI" id="CHEBI:29035"/>
        <label>1</label>
    </ligand>
</feature>
<feature type="binding site" evidence="1">
    <location>
        <position position="381"/>
    </location>
    <ligand>
        <name>Mn(2+)</name>
        <dbReference type="ChEBI" id="CHEBI:29035"/>
        <label>1</label>
    </ligand>
</feature>
<feature type="binding site" evidence="1">
    <location>
        <position position="420"/>
    </location>
    <ligand>
        <name>Mn(2+)</name>
        <dbReference type="ChEBI" id="CHEBI:29035"/>
        <label>1</label>
    </ligand>
</feature>
<feature type="binding site" evidence="1">
    <location>
        <position position="420"/>
    </location>
    <ligand>
        <name>Mn(2+)</name>
        <dbReference type="ChEBI" id="CHEBI:29035"/>
        <label>2</label>
    </ligand>
</feature>
<keyword id="KW-0224">Dipeptidase</keyword>
<keyword id="KW-0378">Hydrolase</keyword>
<keyword id="KW-0464">Manganese</keyword>
<keyword id="KW-0479">Metal-binding</keyword>
<keyword id="KW-0482">Metalloprotease</keyword>
<keyword id="KW-0645">Protease</keyword>
<keyword id="KW-1185">Reference proteome</keyword>
<reference key="1">
    <citation type="journal article" date="2005" name="Nucleic Acids Res.">
        <title>The genome sequence of Xanthomonas oryzae pathovar oryzae KACC10331, the bacterial blight pathogen of rice.</title>
        <authorList>
            <person name="Lee B.-M."/>
            <person name="Park Y.-J."/>
            <person name="Park D.-S."/>
            <person name="Kang H.-W."/>
            <person name="Kim J.-G."/>
            <person name="Song E.-S."/>
            <person name="Park I.-C."/>
            <person name="Yoon U.-H."/>
            <person name="Hahn J.-H."/>
            <person name="Koo B.-S."/>
            <person name="Lee G.-B."/>
            <person name="Kim H."/>
            <person name="Park H.-S."/>
            <person name="Yoon K.-O."/>
            <person name="Kim J.-H."/>
            <person name="Jung C.-H."/>
            <person name="Koh N.-H."/>
            <person name="Seo J.-S."/>
            <person name="Go S.-J."/>
        </authorList>
    </citation>
    <scope>NUCLEOTIDE SEQUENCE [LARGE SCALE GENOMIC DNA]</scope>
    <source>
        <strain>KACC10331 / KXO85</strain>
    </source>
</reference>